<keyword id="KW-0378">Hydrolase</keyword>
<keyword id="KW-0507">mRNA processing</keyword>
<keyword id="KW-0540">Nuclease</keyword>
<keyword id="KW-0539">Nucleus</keyword>
<keyword id="KW-1185">Reference proteome</keyword>
<gene>
    <name type="primary">CPSF73-I</name>
    <name type="ordered locus">At1g61010</name>
    <name type="ORF">T7P1.15</name>
</gene>
<name>CPSF3_ARATH</name>
<comment type="function">
    <text evidence="4">Component of the cleavage and polyadenylation specificity factor (CPSF) complex that play a key role in pre-mRNA 3'-end formation, recognizing the AAUAAA signal sequence and interacting with poly(A) polymerase and other factors to bring about cleavage and poly(A) addition. May function as mRNA 3'-end-processing endonuclease and also be involved in the histone 3'-end pre-mRNA processing.</text>
</comment>
<comment type="subunit">
    <text evidence="2 3">Component of the CPSF complex, at least composed of CPSF160, CPSF100, CPSF73-I, CPSF73-II, CPSF30, FY and FIPS5. Interacts with CLPS3, CPSF100, CPSF160 and FY.</text>
</comment>
<comment type="interaction">
    <interactant intactId="EBI-1775464">
        <id>Q9C952</id>
    </interactant>
    <interactant intactId="EBI-1775444">
        <id>Q9LKF9</id>
        <label>CPSF100</label>
    </interactant>
    <organismsDiffer>false</organismsDiffer>
    <experiments>4</experiments>
</comment>
<comment type="subcellular location">
    <subcellularLocation>
        <location evidence="2 3">Nucleus</location>
    </subcellularLocation>
</comment>
<comment type="tissue specificity">
    <text evidence="2">Highly expressed in carpels. Also detected in seedlings, roots, stems, leaves, flowers and siliques.</text>
</comment>
<comment type="domain">
    <text evidence="1">The HXHXDH motif is essential for the endoribonuclease activity of the CPSF complex.</text>
</comment>
<comment type="miscellaneous">
    <text>CPSF73-I and CPSF73-II are not functionally redundant, but both are essential in plant development. Knockdown or overexpression of CPSF73-I are lethal.</text>
</comment>
<comment type="similarity">
    <text evidence="5">Belongs to the metallo-beta-lactamase superfamily. RNA-metabolizing metallo-beta-lactamase-like family. INTS11 subfamily.</text>
</comment>
<feature type="chain" id="PRO_0000391780" description="Cleavage and polyadenylation specificity factor subunit 3-I">
    <location>
        <begin position="1"/>
        <end position="693"/>
    </location>
</feature>
<feature type="short sequence motif" description="HXHXDH motif">
    <location>
        <begin position="81"/>
        <end position="86"/>
    </location>
</feature>
<feature type="sequence conflict" description="In Ref. 4; AAL66977." evidence="5" ref="4">
    <original>G</original>
    <variation>S</variation>
    <location>
        <position position="651"/>
    </location>
</feature>
<dbReference type="EC" id="3.1.27.-"/>
<dbReference type="EMBL" id="AY140900">
    <property type="protein sequence ID" value="AAN41458.1"/>
    <property type="molecule type" value="mRNA"/>
</dbReference>
<dbReference type="EMBL" id="AC018908">
    <property type="protein sequence ID" value="AAG51638.1"/>
    <property type="molecule type" value="Genomic_DNA"/>
</dbReference>
<dbReference type="EMBL" id="CP002684">
    <property type="protein sequence ID" value="AEE33766.1"/>
    <property type="molecule type" value="Genomic_DNA"/>
</dbReference>
<dbReference type="EMBL" id="CP002684">
    <property type="protein sequence ID" value="AEE33767.1"/>
    <property type="molecule type" value="Genomic_DNA"/>
</dbReference>
<dbReference type="EMBL" id="CP002684">
    <property type="protein sequence ID" value="AEE33768.1"/>
    <property type="molecule type" value="Genomic_DNA"/>
</dbReference>
<dbReference type="EMBL" id="CP002684">
    <property type="protein sequence ID" value="ANM58845.1"/>
    <property type="molecule type" value="Genomic_DNA"/>
</dbReference>
<dbReference type="EMBL" id="CP002684">
    <property type="protein sequence ID" value="ANM58846.1"/>
    <property type="molecule type" value="Genomic_DNA"/>
</dbReference>
<dbReference type="EMBL" id="AY150478">
    <property type="protein sequence ID" value="AAN13003.1"/>
    <property type="molecule type" value="mRNA"/>
</dbReference>
<dbReference type="EMBL" id="AY074280">
    <property type="protein sequence ID" value="AAL66977.1"/>
    <property type="molecule type" value="mRNA"/>
</dbReference>
<dbReference type="EMBL" id="AK316692">
    <property type="protein sequence ID" value="BAH19419.1"/>
    <property type="molecule type" value="mRNA"/>
</dbReference>
<dbReference type="EMBL" id="AK316794">
    <property type="protein sequence ID" value="BAH19511.1"/>
    <property type="molecule type" value="mRNA"/>
</dbReference>
<dbReference type="PIR" id="G96635">
    <property type="entry name" value="G96635"/>
</dbReference>
<dbReference type="RefSeq" id="NP_001031215.1">
    <property type="nucleotide sequence ID" value="NM_001036138.2"/>
</dbReference>
<dbReference type="RefSeq" id="NP_001319278.1">
    <property type="nucleotide sequence ID" value="NM_001333924.1"/>
</dbReference>
<dbReference type="RefSeq" id="NP_001321253.1">
    <property type="nucleotide sequence ID" value="NM_001333925.1"/>
</dbReference>
<dbReference type="RefSeq" id="NP_176297.1">
    <property type="nucleotide sequence ID" value="NM_104782.4"/>
</dbReference>
<dbReference type="RefSeq" id="NP_849835.1">
    <property type="nucleotide sequence ID" value="NM_179504.2"/>
</dbReference>
<dbReference type="SMR" id="Q9C952"/>
<dbReference type="BioGRID" id="27617">
    <property type="interactions" value="6"/>
</dbReference>
<dbReference type="DIP" id="DIP-40388N"/>
<dbReference type="FunCoup" id="Q9C952">
    <property type="interactions" value="4383"/>
</dbReference>
<dbReference type="IntAct" id="Q9C952">
    <property type="interactions" value="2"/>
</dbReference>
<dbReference type="STRING" id="3702.Q9C952"/>
<dbReference type="iPTMnet" id="Q9C952"/>
<dbReference type="PaxDb" id="3702-AT1G61010.2"/>
<dbReference type="ProteomicsDB" id="222673"/>
<dbReference type="EnsemblPlants" id="AT1G61010.1">
    <property type="protein sequence ID" value="AT1G61010.1"/>
    <property type="gene ID" value="AT1G61010"/>
</dbReference>
<dbReference type="EnsemblPlants" id="AT1G61010.2">
    <property type="protein sequence ID" value="AT1G61010.2"/>
    <property type="gene ID" value="AT1G61010"/>
</dbReference>
<dbReference type="EnsemblPlants" id="AT1G61010.3">
    <property type="protein sequence ID" value="AT1G61010.3"/>
    <property type="gene ID" value="AT1G61010"/>
</dbReference>
<dbReference type="EnsemblPlants" id="AT1G61010.4">
    <property type="protein sequence ID" value="AT1G61010.4"/>
    <property type="gene ID" value="AT1G61010"/>
</dbReference>
<dbReference type="EnsemblPlants" id="AT1G61010.5">
    <property type="protein sequence ID" value="AT1G61010.5"/>
    <property type="gene ID" value="AT1G61010"/>
</dbReference>
<dbReference type="GeneID" id="842393"/>
<dbReference type="Gramene" id="AT1G61010.1">
    <property type="protein sequence ID" value="AT1G61010.1"/>
    <property type="gene ID" value="AT1G61010"/>
</dbReference>
<dbReference type="Gramene" id="AT1G61010.2">
    <property type="protein sequence ID" value="AT1G61010.2"/>
    <property type="gene ID" value="AT1G61010"/>
</dbReference>
<dbReference type="Gramene" id="AT1G61010.3">
    <property type="protein sequence ID" value="AT1G61010.3"/>
    <property type="gene ID" value="AT1G61010"/>
</dbReference>
<dbReference type="Gramene" id="AT1G61010.4">
    <property type="protein sequence ID" value="AT1G61010.4"/>
    <property type="gene ID" value="AT1G61010"/>
</dbReference>
<dbReference type="Gramene" id="AT1G61010.5">
    <property type="protein sequence ID" value="AT1G61010.5"/>
    <property type="gene ID" value="AT1G61010"/>
</dbReference>
<dbReference type="KEGG" id="ath:AT1G61010"/>
<dbReference type="Araport" id="AT1G61010"/>
<dbReference type="TAIR" id="AT1G61010">
    <property type="gene designation" value="CPSF73-I"/>
</dbReference>
<dbReference type="eggNOG" id="KOG1137">
    <property type="taxonomic scope" value="Eukaryota"/>
</dbReference>
<dbReference type="HOGENOM" id="CLU_009673_2_3_1"/>
<dbReference type="InParanoid" id="Q9C952"/>
<dbReference type="OMA" id="CKQHITL"/>
<dbReference type="OrthoDB" id="10249535at2759"/>
<dbReference type="PhylomeDB" id="Q9C952"/>
<dbReference type="PRO" id="PR:Q9C952"/>
<dbReference type="Proteomes" id="UP000006548">
    <property type="component" value="Chromosome 1"/>
</dbReference>
<dbReference type="ExpressionAtlas" id="Q9C952">
    <property type="expression patterns" value="baseline and differential"/>
</dbReference>
<dbReference type="GO" id="GO:0005634">
    <property type="term" value="C:nucleus"/>
    <property type="evidence" value="ECO:0000314"/>
    <property type="project" value="UniProtKB"/>
</dbReference>
<dbReference type="GO" id="GO:0004518">
    <property type="term" value="F:nuclease activity"/>
    <property type="evidence" value="ECO:0007669"/>
    <property type="project" value="UniProtKB-KW"/>
</dbReference>
<dbReference type="GO" id="GO:0006397">
    <property type="term" value="P:mRNA processing"/>
    <property type="evidence" value="ECO:0007669"/>
    <property type="project" value="UniProtKB-KW"/>
</dbReference>
<dbReference type="GO" id="GO:0016180">
    <property type="term" value="P:snRNA processing"/>
    <property type="evidence" value="ECO:0000315"/>
    <property type="project" value="TAIR"/>
</dbReference>
<dbReference type="CDD" id="cd16292">
    <property type="entry name" value="CPSF3-like_MBL-fold"/>
    <property type="match status" value="1"/>
</dbReference>
<dbReference type="FunFam" id="3.60.15.10:FF:000001">
    <property type="entry name" value="Cleavage and polyadenylation specificity factor"/>
    <property type="match status" value="1"/>
</dbReference>
<dbReference type="FunFam" id="3.40.50.10890:FF:000001">
    <property type="entry name" value="Cleavage and polyadenylation specificity factor subunit 3"/>
    <property type="match status" value="1"/>
</dbReference>
<dbReference type="Gene3D" id="3.40.50.10890">
    <property type="match status" value="1"/>
</dbReference>
<dbReference type="Gene3D" id="3.60.15.10">
    <property type="entry name" value="Ribonuclease Z/Hydroxyacylglutathione hydrolase-like"/>
    <property type="match status" value="1"/>
</dbReference>
<dbReference type="InterPro" id="IPR022712">
    <property type="entry name" value="Beta_Casp"/>
</dbReference>
<dbReference type="InterPro" id="IPR021718">
    <property type="entry name" value="CPSF73-100_C"/>
</dbReference>
<dbReference type="InterPro" id="IPR050698">
    <property type="entry name" value="MBL"/>
</dbReference>
<dbReference type="InterPro" id="IPR001279">
    <property type="entry name" value="Metallo-B-lactamas"/>
</dbReference>
<dbReference type="InterPro" id="IPR036866">
    <property type="entry name" value="RibonucZ/Hydroxyglut_hydro"/>
</dbReference>
<dbReference type="InterPro" id="IPR011108">
    <property type="entry name" value="RMMBL"/>
</dbReference>
<dbReference type="PANTHER" id="PTHR11203">
    <property type="entry name" value="CLEAVAGE AND POLYADENYLATION SPECIFICITY FACTOR FAMILY MEMBER"/>
    <property type="match status" value="1"/>
</dbReference>
<dbReference type="PANTHER" id="PTHR11203:SF11">
    <property type="entry name" value="CLEAVAGE AND POLYADENYLATION SPECIFICITY FACTOR SUBUNIT 3"/>
    <property type="match status" value="1"/>
</dbReference>
<dbReference type="Pfam" id="PF10996">
    <property type="entry name" value="Beta-Casp"/>
    <property type="match status" value="1"/>
</dbReference>
<dbReference type="Pfam" id="PF11718">
    <property type="entry name" value="CPSF73-100_C"/>
    <property type="match status" value="1"/>
</dbReference>
<dbReference type="Pfam" id="PF16661">
    <property type="entry name" value="Lactamase_B_6"/>
    <property type="match status" value="1"/>
</dbReference>
<dbReference type="Pfam" id="PF07521">
    <property type="entry name" value="RMMBL"/>
    <property type="match status" value="1"/>
</dbReference>
<dbReference type="SMART" id="SM01027">
    <property type="entry name" value="Beta-Casp"/>
    <property type="match status" value="1"/>
</dbReference>
<dbReference type="SMART" id="SM01098">
    <property type="entry name" value="CPSF73-100_C"/>
    <property type="match status" value="1"/>
</dbReference>
<dbReference type="SMART" id="SM00849">
    <property type="entry name" value="Lactamase_B"/>
    <property type="match status" value="1"/>
</dbReference>
<dbReference type="SUPFAM" id="SSF56281">
    <property type="entry name" value="Metallo-hydrolase/oxidoreductase"/>
    <property type="match status" value="1"/>
</dbReference>
<reference key="1">
    <citation type="journal article" date="2006" name="Plant Mol. Biol.">
        <title>The 73 kD subunit of the cleavage and polyadenylation specificity factor (CPSF) complex affects reproductive development in Arabidopsis.</title>
        <authorList>
            <person name="Xu R."/>
            <person name="Zhao H."/>
            <person name="Dinkins R.D."/>
            <person name="Cheng X."/>
            <person name="Carberry G."/>
            <person name="Li Q.Q."/>
        </authorList>
    </citation>
    <scope>NUCLEOTIDE SEQUENCE [MRNA]</scope>
    <scope>INTERACTION WITH CPSF100</scope>
    <scope>TISSUE SPECIFICITY</scope>
    <scope>SUBCELLULAR LOCATION</scope>
</reference>
<reference key="2">
    <citation type="journal article" date="2000" name="Nature">
        <title>Sequence and analysis of chromosome 1 of the plant Arabidopsis thaliana.</title>
        <authorList>
            <person name="Theologis A."/>
            <person name="Ecker J.R."/>
            <person name="Palm C.J."/>
            <person name="Federspiel N.A."/>
            <person name="Kaul S."/>
            <person name="White O."/>
            <person name="Alonso J."/>
            <person name="Altafi H."/>
            <person name="Araujo R."/>
            <person name="Bowman C.L."/>
            <person name="Brooks S.Y."/>
            <person name="Buehler E."/>
            <person name="Chan A."/>
            <person name="Chao Q."/>
            <person name="Chen H."/>
            <person name="Cheuk R.F."/>
            <person name="Chin C.W."/>
            <person name="Chung M.K."/>
            <person name="Conn L."/>
            <person name="Conway A.B."/>
            <person name="Conway A.R."/>
            <person name="Creasy T.H."/>
            <person name="Dewar K."/>
            <person name="Dunn P."/>
            <person name="Etgu P."/>
            <person name="Feldblyum T.V."/>
            <person name="Feng J.-D."/>
            <person name="Fong B."/>
            <person name="Fujii C.Y."/>
            <person name="Gill J.E."/>
            <person name="Goldsmith A.D."/>
            <person name="Haas B."/>
            <person name="Hansen N.F."/>
            <person name="Hughes B."/>
            <person name="Huizar L."/>
            <person name="Hunter J.L."/>
            <person name="Jenkins J."/>
            <person name="Johnson-Hopson C."/>
            <person name="Khan S."/>
            <person name="Khaykin E."/>
            <person name="Kim C.J."/>
            <person name="Koo H.L."/>
            <person name="Kremenetskaia I."/>
            <person name="Kurtz D.B."/>
            <person name="Kwan A."/>
            <person name="Lam B."/>
            <person name="Langin-Hooper S."/>
            <person name="Lee A."/>
            <person name="Lee J.M."/>
            <person name="Lenz C.A."/>
            <person name="Li J.H."/>
            <person name="Li Y.-P."/>
            <person name="Lin X."/>
            <person name="Liu S.X."/>
            <person name="Liu Z.A."/>
            <person name="Luros J.S."/>
            <person name="Maiti R."/>
            <person name="Marziali A."/>
            <person name="Militscher J."/>
            <person name="Miranda M."/>
            <person name="Nguyen M."/>
            <person name="Nierman W.C."/>
            <person name="Osborne B.I."/>
            <person name="Pai G."/>
            <person name="Peterson J."/>
            <person name="Pham P.K."/>
            <person name="Rizzo M."/>
            <person name="Rooney T."/>
            <person name="Rowley D."/>
            <person name="Sakano H."/>
            <person name="Salzberg S.L."/>
            <person name="Schwartz J.R."/>
            <person name="Shinn P."/>
            <person name="Southwick A.M."/>
            <person name="Sun H."/>
            <person name="Tallon L.J."/>
            <person name="Tambunga G."/>
            <person name="Toriumi M.J."/>
            <person name="Town C.D."/>
            <person name="Utterback T."/>
            <person name="Van Aken S."/>
            <person name="Vaysberg M."/>
            <person name="Vysotskaia V.S."/>
            <person name="Walker M."/>
            <person name="Wu D."/>
            <person name="Yu G."/>
            <person name="Fraser C.M."/>
            <person name="Venter J.C."/>
            <person name="Davis R.W."/>
        </authorList>
    </citation>
    <scope>NUCLEOTIDE SEQUENCE [LARGE SCALE GENOMIC DNA]</scope>
    <source>
        <strain>cv. Columbia</strain>
    </source>
</reference>
<reference key="3">
    <citation type="journal article" date="2017" name="Plant J.">
        <title>Araport11: a complete reannotation of the Arabidopsis thaliana reference genome.</title>
        <authorList>
            <person name="Cheng C.Y."/>
            <person name="Krishnakumar V."/>
            <person name="Chan A.P."/>
            <person name="Thibaud-Nissen F."/>
            <person name="Schobel S."/>
            <person name="Town C.D."/>
        </authorList>
    </citation>
    <scope>GENOME REANNOTATION</scope>
    <source>
        <strain>cv. Columbia</strain>
    </source>
</reference>
<reference key="4">
    <citation type="journal article" date="2003" name="Science">
        <title>Empirical analysis of transcriptional activity in the Arabidopsis genome.</title>
        <authorList>
            <person name="Yamada K."/>
            <person name="Lim J."/>
            <person name="Dale J.M."/>
            <person name="Chen H."/>
            <person name="Shinn P."/>
            <person name="Palm C.J."/>
            <person name="Southwick A.M."/>
            <person name="Wu H.C."/>
            <person name="Kim C.J."/>
            <person name="Nguyen M."/>
            <person name="Pham P.K."/>
            <person name="Cheuk R.F."/>
            <person name="Karlin-Newmann G."/>
            <person name="Liu S.X."/>
            <person name="Lam B."/>
            <person name="Sakano H."/>
            <person name="Wu T."/>
            <person name="Yu G."/>
            <person name="Miranda M."/>
            <person name="Quach H.L."/>
            <person name="Tripp M."/>
            <person name="Chang C.H."/>
            <person name="Lee J.M."/>
            <person name="Toriumi M.J."/>
            <person name="Chan M.M."/>
            <person name="Tang C.C."/>
            <person name="Onodera C.S."/>
            <person name="Deng J.M."/>
            <person name="Akiyama K."/>
            <person name="Ansari Y."/>
            <person name="Arakawa T."/>
            <person name="Banh J."/>
            <person name="Banno F."/>
            <person name="Bowser L."/>
            <person name="Brooks S.Y."/>
            <person name="Carninci P."/>
            <person name="Chao Q."/>
            <person name="Choy N."/>
            <person name="Enju A."/>
            <person name="Goldsmith A.D."/>
            <person name="Gurjal M."/>
            <person name="Hansen N.F."/>
            <person name="Hayashizaki Y."/>
            <person name="Johnson-Hopson C."/>
            <person name="Hsuan V.W."/>
            <person name="Iida K."/>
            <person name="Karnes M."/>
            <person name="Khan S."/>
            <person name="Koesema E."/>
            <person name="Ishida J."/>
            <person name="Jiang P.X."/>
            <person name="Jones T."/>
            <person name="Kawai J."/>
            <person name="Kamiya A."/>
            <person name="Meyers C."/>
            <person name="Nakajima M."/>
            <person name="Narusaka M."/>
            <person name="Seki M."/>
            <person name="Sakurai T."/>
            <person name="Satou M."/>
            <person name="Tamse R."/>
            <person name="Vaysberg M."/>
            <person name="Wallender E.K."/>
            <person name="Wong C."/>
            <person name="Yamamura Y."/>
            <person name="Yuan S."/>
            <person name="Shinozaki K."/>
            <person name="Davis R.W."/>
            <person name="Theologis A."/>
            <person name="Ecker J.R."/>
        </authorList>
    </citation>
    <scope>NUCLEOTIDE SEQUENCE [LARGE SCALE MRNA]</scope>
    <source>
        <strain>cv. Columbia</strain>
    </source>
</reference>
<reference key="5">
    <citation type="journal article" date="2009" name="BMC Cell Biol.">
        <title>Distinctive interactions of the Arabidopsis homolog of the 30 kD subunit of the cleavage and polyadenylation specificity factor (AtCPSF30) with other polyadenylation factor subunits.</title>
        <authorList>
            <person name="Rao S."/>
            <person name="Dinkins R.D."/>
            <person name="Hunt A.G."/>
        </authorList>
    </citation>
    <scope>SUBCELLULAR LOCATION</scope>
    <scope>INTERACTION WITH CPSF30</scope>
</reference>
<reference key="6">
    <citation type="journal article" date="2009" name="DNA Res.">
        <title>Analysis of multiple occurrences of alternative splicing events in Arabidopsis thaliana using novel sequenced full-length cDNAs.</title>
        <authorList>
            <person name="Iida K."/>
            <person name="Fukami-Kobayashi K."/>
            <person name="Toyoda A."/>
            <person name="Sakaki Y."/>
            <person name="Kobayashi M."/>
            <person name="Seki M."/>
            <person name="Shinozaki K."/>
        </authorList>
    </citation>
    <scope>NUCLEOTIDE SEQUENCE [LARGE SCALE MRNA]</scope>
    <source>
        <strain>cv. Columbia</strain>
        <tissue>Rosette leaf</tissue>
    </source>
</reference>
<reference key="7">
    <citation type="journal article" date="2009" name="Plant Physiol.">
        <title>Unique features of plant cleavage and polyadenylation specificity factor revealed by proteomic studies.</title>
        <authorList>
            <person name="Zhao H."/>
            <person name="Xing D."/>
            <person name="Li Q.Q."/>
        </authorList>
    </citation>
    <scope>COMPONENT OF CPSF COMPLEX</scope>
</reference>
<evidence type="ECO:0000250" key="1"/>
<evidence type="ECO:0000269" key="2">
    <source>
    </source>
</evidence>
<evidence type="ECO:0000269" key="3">
    <source>
    </source>
</evidence>
<evidence type="ECO:0000303" key="4">
    <source>
    </source>
</evidence>
<evidence type="ECO:0000305" key="5"/>
<proteinExistence type="evidence at protein level"/>
<organism>
    <name type="scientific">Arabidopsis thaliana</name>
    <name type="common">Mouse-ear cress</name>
    <dbReference type="NCBI Taxonomy" id="3702"/>
    <lineage>
        <taxon>Eukaryota</taxon>
        <taxon>Viridiplantae</taxon>
        <taxon>Streptophyta</taxon>
        <taxon>Embryophyta</taxon>
        <taxon>Tracheophyta</taxon>
        <taxon>Spermatophyta</taxon>
        <taxon>Magnoliopsida</taxon>
        <taxon>eudicotyledons</taxon>
        <taxon>Gunneridae</taxon>
        <taxon>Pentapetalae</taxon>
        <taxon>rosids</taxon>
        <taxon>malvids</taxon>
        <taxon>Brassicales</taxon>
        <taxon>Brassicaceae</taxon>
        <taxon>Camelineae</taxon>
        <taxon>Arabidopsis</taxon>
    </lineage>
</organism>
<protein>
    <recommendedName>
        <fullName>Cleavage and polyadenylation specificity factor subunit 3-I</fullName>
        <ecNumber>3.1.27.-</ecNumber>
    </recommendedName>
    <alternativeName>
        <fullName>Cleavage and polyadenylation specificity factor 73 kDa subunit I</fullName>
        <shortName>AtCPSF73-I</shortName>
        <shortName>CPSF 73 kDa subunit I</shortName>
    </alternativeName>
</protein>
<accession>Q9C952</accession>
<accession>Q8VY18</accession>
<sequence length="693" mass="77365">MASSSTSLKRREQPISRDGDQLIVTPLGAGSEVGRSCVYMSFRGKNILFDCGIHPAYSGMAALPYFDEIDPSSIDVLLITHFHIDHAASLPYFLEKTTFNGRVFMTHATKAIYKLLLTDYVKVSKVSVEDMLFDEQDINKSMDKIEVIDFHQTVEVNGIKFWCYTAGHVLGAAMFMVDIAGVRILYTGDYSREEDRHLRAAELPQFSPDICIIESTSGVQLHQSRHIREKRFTDVIHSTVAQGGRVLIPAFALGRAQELLLILDEYWANHPDLHNIPIYYASPLAKKCMAVYQTYILSMNDRIRNQFANSNPFVFKHISPLNSIDDFNDVGPSVVMATPGGLQSGLSRQLFDSWCSDKKNACIIPGYMVEGTLAKTIINEPKEVTLMNGLTAPLNMQVHYISFSAHADYAQTSTFLKELMPPNIILVHGEANEMMRLKQKLLTEFPDGNTKIMTPKNCESVEMYFNSEKLAKTIGRLAEKTPDVGDTVSGILVKKGFTYQIMAPDELHVFSQLSTATVTQRITIPFVGAFGVIKHRLEKIFESVEFSTDEESGLPALKVHERVTVKQESEKHISLQWSSDPISDMVSDSIVALILNISREVPKIVMEEEDAVKSEEENGKKVEKVIYALLVSLFGDVKLGENGKLVIRVDGNVAQLDKESGEVESEHSGLKERVRVAFERIQSAVKPIPLSAS</sequence>